<gene>
    <name evidence="1" type="primary">crl</name>
    <name type="ordered locus">YpAngola_A3302</name>
</gene>
<dbReference type="EMBL" id="CP000901">
    <property type="protein sequence ID" value="ABX87136.1"/>
    <property type="molecule type" value="Genomic_DNA"/>
</dbReference>
<dbReference type="RefSeq" id="WP_002208702.1">
    <property type="nucleotide sequence ID" value="NZ_CP009935.1"/>
</dbReference>
<dbReference type="SMR" id="A9R2X2"/>
<dbReference type="GeneID" id="57975495"/>
<dbReference type="KEGG" id="ypg:YpAngola_A3302"/>
<dbReference type="PATRIC" id="fig|349746.12.peg.4369"/>
<dbReference type="GO" id="GO:0005737">
    <property type="term" value="C:cytoplasm"/>
    <property type="evidence" value="ECO:0007669"/>
    <property type="project" value="UniProtKB-SubCell"/>
</dbReference>
<dbReference type="GO" id="GO:0045893">
    <property type="term" value="P:positive regulation of DNA-templated transcription"/>
    <property type="evidence" value="ECO:0007669"/>
    <property type="project" value="UniProtKB-UniRule"/>
</dbReference>
<dbReference type="Gene3D" id="3.30.310.230">
    <property type="entry name" value="Sigma factor-binding protein Crl monomer"/>
    <property type="match status" value="1"/>
</dbReference>
<dbReference type="HAMAP" id="MF_01178">
    <property type="entry name" value="Crl"/>
    <property type="match status" value="1"/>
</dbReference>
<dbReference type="InterPro" id="IPR009986">
    <property type="entry name" value="Tscrpt_reg_Crl"/>
</dbReference>
<dbReference type="InterPro" id="IPR038208">
    <property type="entry name" value="Tscrpt_reg_Crl_sf"/>
</dbReference>
<dbReference type="NCBIfam" id="NF008217">
    <property type="entry name" value="PRK10984.1"/>
    <property type="match status" value="1"/>
</dbReference>
<dbReference type="Pfam" id="PF07417">
    <property type="entry name" value="Crl"/>
    <property type="match status" value="1"/>
</dbReference>
<comment type="function">
    <text evidence="1">Binds to the sigma-S subunit of RNA polymerase, activating expression of sigma-S-regulated genes. Stimulates RNA polymerase holoenzyme formation and may bind to several other sigma factors, such as sigma-70 and sigma-32.</text>
</comment>
<comment type="subcellular location">
    <subcellularLocation>
        <location evidence="1">Cytoplasm</location>
    </subcellularLocation>
</comment>
<comment type="similarity">
    <text evidence="1">Belongs to the Crl family.</text>
</comment>
<proteinExistence type="inferred from homology"/>
<organism>
    <name type="scientific">Yersinia pestis bv. Antiqua (strain Angola)</name>
    <dbReference type="NCBI Taxonomy" id="349746"/>
    <lineage>
        <taxon>Bacteria</taxon>
        <taxon>Pseudomonadati</taxon>
        <taxon>Pseudomonadota</taxon>
        <taxon>Gammaproteobacteria</taxon>
        <taxon>Enterobacterales</taxon>
        <taxon>Yersiniaceae</taxon>
        <taxon>Yersinia</taxon>
    </lineage>
</organism>
<accession>A9R2X2</accession>
<evidence type="ECO:0000255" key="1">
    <source>
        <dbReference type="HAMAP-Rule" id="MF_01178"/>
    </source>
</evidence>
<reference key="1">
    <citation type="journal article" date="2010" name="J. Bacteriol.">
        <title>Genome sequence of the deep-rooted Yersinia pestis strain Angola reveals new insights into the evolution and pangenome of the plague bacterium.</title>
        <authorList>
            <person name="Eppinger M."/>
            <person name="Worsham P.L."/>
            <person name="Nikolich M.P."/>
            <person name="Riley D.R."/>
            <person name="Sebastian Y."/>
            <person name="Mou S."/>
            <person name="Achtman M."/>
            <person name="Lindler L.E."/>
            <person name="Ravel J."/>
        </authorList>
    </citation>
    <scope>NUCLEOTIDE SEQUENCE [LARGE SCALE GENOMIC DNA]</scope>
    <source>
        <strain>Angola</strain>
    </source>
</reference>
<name>CRL_YERPG</name>
<feature type="chain" id="PRO_1000138153" description="Sigma factor-binding protein Crl">
    <location>
        <begin position="1"/>
        <end position="133"/>
    </location>
</feature>
<feature type="region of interest" description="Essential for activity" evidence="1">
    <location>
        <begin position="99"/>
        <end position="122"/>
    </location>
</feature>
<sequence>MTLTSAHPKSKLMKRFAALGPYLREGQCQNDHFFFDCLAVCINVKLAPEKREFWGWWIELEPSAGRFTYVYQLGLFNKEGNWNAEKISDPEVQDKLESTLRSFHLRLEEMLASIDMKLEPAADFNDQPVKLSA</sequence>
<keyword id="KW-0010">Activator</keyword>
<keyword id="KW-0963">Cytoplasm</keyword>
<keyword id="KW-0804">Transcription</keyword>
<keyword id="KW-0805">Transcription regulation</keyword>
<protein>
    <recommendedName>
        <fullName evidence="1">Sigma factor-binding protein Crl</fullName>
    </recommendedName>
</protein>